<name>Y1630_STAA1</name>
<sequence>MMDNKDYKKFYLIREDVLPESVVKTLKIKDALKSDPTLSIYDAVKQFDLSRSAFYKYRETIFPVDDKMLDHREFTLILYVTDIVGMLARVLDVISKLELSVLTIHQSIPMEEKATITLSLNAKSKETSVEDVIGALRNLDYVSKVELISMSM</sequence>
<accession>A7X359</accession>
<protein>
    <recommendedName>
        <fullName evidence="1">UPF0735 ACT domain-containing protein SAHV_1630</fullName>
    </recommendedName>
</protein>
<reference key="1">
    <citation type="journal article" date="2008" name="Antimicrob. Agents Chemother.">
        <title>Mutated response regulator graR is responsible for phenotypic conversion of Staphylococcus aureus from heterogeneous vancomycin-intermediate resistance to vancomycin-intermediate resistance.</title>
        <authorList>
            <person name="Neoh H.-M."/>
            <person name="Cui L."/>
            <person name="Yuzawa H."/>
            <person name="Takeuchi F."/>
            <person name="Matsuo M."/>
            <person name="Hiramatsu K."/>
        </authorList>
    </citation>
    <scope>NUCLEOTIDE SEQUENCE [LARGE SCALE GENOMIC DNA]</scope>
    <source>
        <strain>Mu3 / ATCC 700698</strain>
    </source>
</reference>
<gene>
    <name type="ordered locus">SAHV_1630</name>
</gene>
<proteinExistence type="inferred from homology"/>
<dbReference type="EMBL" id="AP009324">
    <property type="protein sequence ID" value="BAF78513.1"/>
    <property type="molecule type" value="Genomic_DNA"/>
</dbReference>
<dbReference type="KEGG" id="saw:SAHV_1630"/>
<dbReference type="HOGENOM" id="CLU_128147_0_0_9"/>
<dbReference type="Gene3D" id="3.30.70.260">
    <property type="match status" value="1"/>
</dbReference>
<dbReference type="HAMAP" id="MF_00707">
    <property type="entry name" value="UPF0735"/>
    <property type="match status" value="1"/>
</dbReference>
<dbReference type="InterPro" id="IPR045865">
    <property type="entry name" value="ACT-like_dom_sf"/>
</dbReference>
<dbReference type="InterPro" id="IPR002912">
    <property type="entry name" value="ACT_dom"/>
</dbReference>
<dbReference type="InterPro" id="IPR008310">
    <property type="entry name" value="UPF0735_ACT_dom-cont"/>
</dbReference>
<dbReference type="NCBIfam" id="NF003361">
    <property type="entry name" value="PRK04435.1"/>
    <property type="match status" value="1"/>
</dbReference>
<dbReference type="PIRSF" id="PIRSF025624">
    <property type="entry name" value="ACT_PheB"/>
    <property type="match status" value="1"/>
</dbReference>
<dbReference type="SUPFAM" id="SSF55021">
    <property type="entry name" value="ACT-like"/>
    <property type="match status" value="1"/>
</dbReference>
<dbReference type="PROSITE" id="PS51671">
    <property type="entry name" value="ACT"/>
    <property type="match status" value="1"/>
</dbReference>
<organism>
    <name type="scientific">Staphylococcus aureus (strain Mu3 / ATCC 700698)</name>
    <dbReference type="NCBI Taxonomy" id="418127"/>
    <lineage>
        <taxon>Bacteria</taxon>
        <taxon>Bacillati</taxon>
        <taxon>Bacillota</taxon>
        <taxon>Bacilli</taxon>
        <taxon>Bacillales</taxon>
        <taxon>Staphylococcaceae</taxon>
        <taxon>Staphylococcus</taxon>
    </lineage>
</organism>
<feature type="chain" id="PRO_1000045520" description="UPF0735 ACT domain-containing protein SAHV_1630">
    <location>
        <begin position="1"/>
        <end position="152"/>
    </location>
</feature>
<feature type="domain" description="ACT" evidence="1">
    <location>
        <begin position="75"/>
        <end position="150"/>
    </location>
</feature>
<evidence type="ECO:0000255" key="1">
    <source>
        <dbReference type="HAMAP-Rule" id="MF_00707"/>
    </source>
</evidence>
<comment type="similarity">
    <text evidence="1">Belongs to the UPF0735 family.</text>
</comment>